<accession>P66973</accession>
<accession>Q99QT3</accession>
<evidence type="ECO:0000255" key="1">
    <source>
        <dbReference type="HAMAP-Rule" id="MF_00379"/>
    </source>
</evidence>
<sequence>MDLDTITSISTPMGEGAIGIVRLSGPQAVEIADKLYKGKHLLNDVPSHTINYGHIIDPESKEVVEEVMVSVLRAPKTFTREDIIEINCHGGILTINRVLELTMTYGARMAEPGEFTKRAFLNGRIDLSQAEAVMDFIRSKTDRASKVAMNQIEGRLSDLIKKQRQSILEILAQVEVNIDYPEYDDVEDATTEFLLEQSKEIKQEINRLLDTGAQGKIMREGLSTVIVGKPNVGKSSMLNNLIQDNKAIVTEVAGTTRDVLEEYVNVRGVPLRLVDTAGIRETEDIVEKIGVERSRKALSQADLILFVLNNNEALTQEDYTLYEVVKNEDVIVIVNKMDLEQNIDINEVKDMIGDTPLIQTSMLKQEGIDELEIQIRDLFFGGEVQNQDMTYVSNSRHISLLKQARQTIQDAIDAAESGVPMDMVQIDLTRTWEILGEIIGETASDELIDQLFSQFCLGK</sequence>
<keyword id="KW-0963">Cytoplasm</keyword>
<keyword id="KW-0342">GTP-binding</keyword>
<keyword id="KW-0378">Hydrolase</keyword>
<keyword id="KW-0460">Magnesium</keyword>
<keyword id="KW-0479">Metal-binding</keyword>
<keyword id="KW-0547">Nucleotide-binding</keyword>
<keyword id="KW-0630">Potassium</keyword>
<keyword id="KW-0819">tRNA processing</keyword>
<feature type="chain" id="PRO_0000188920" description="tRNA modification GTPase MnmE">
    <location>
        <begin position="1"/>
        <end position="459"/>
    </location>
</feature>
<feature type="domain" description="TrmE-type G">
    <location>
        <begin position="221"/>
        <end position="380"/>
    </location>
</feature>
<feature type="binding site" evidence="1">
    <location>
        <position position="22"/>
    </location>
    <ligand>
        <name>(6S)-5-formyl-5,6,7,8-tetrahydrofolate</name>
        <dbReference type="ChEBI" id="CHEBI:57457"/>
    </ligand>
</feature>
<feature type="binding site" evidence="1">
    <location>
        <position position="85"/>
    </location>
    <ligand>
        <name>(6S)-5-formyl-5,6,7,8-tetrahydrofolate</name>
        <dbReference type="ChEBI" id="CHEBI:57457"/>
    </ligand>
</feature>
<feature type="binding site" evidence="1">
    <location>
        <position position="124"/>
    </location>
    <ligand>
        <name>(6S)-5-formyl-5,6,7,8-tetrahydrofolate</name>
        <dbReference type="ChEBI" id="CHEBI:57457"/>
    </ligand>
</feature>
<feature type="binding site" evidence="1">
    <location>
        <begin position="231"/>
        <end position="236"/>
    </location>
    <ligand>
        <name>GTP</name>
        <dbReference type="ChEBI" id="CHEBI:37565"/>
    </ligand>
</feature>
<feature type="binding site" evidence="1">
    <location>
        <position position="231"/>
    </location>
    <ligand>
        <name>K(+)</name>
        <dbReference type="ChEBI" id="CHEBI:29103"/>
    </ligand>
</feature>
<feature type="binding site" evidence="1">
    <location>
        <position position="235"/>
    </location>
    <ligand>
        <name>Mg(2+)</name>
        <dbReference type="ChEBI" id="CHEBI:18420"/>
    </ligand>
</feature>
<feature type="binding site" evidence="1">
    <location>
        <begin position="250"/>
        <end position="256"/>
    </location>
    <ligand>
        <name>GTP</name>
        <dbReference type="ChEBI" id="CHEBI:37565"/>
    </ligand>
</feature>
<feature type="binding site" evidence="1">
    <location>
        <position position="250"/>
    </location>
    <ligand>
        <name>K(+)</name>
        <dbReference type="ChEBI" id="CHEBI:29103"/>
    </ligand>
</feature>
<feature type="binding site" evidence="1">
    <location>
        <position position="252"/>
    </location>
    <ligand>
        <name>K(+)</name>
        <dbReference type="ChEBI" id="CHEBI:29103"/>
    </ligand>
</feature>
<feature type="binding site" evidence="1">
    <location>
        <position position="255"/>
    </location>
    <ligand>
        <name>K(+)</name>
        <dbReference type="ChEBI" id="CHEBI:29103"/>
    </ligand>
</feature>
<feature type="binding site" evidence="1">
    <location>
        <position position="256"/>
    </location>
    <ligand>
        <name>Mg(2+)</name>
        <dbReference type="ChEBI" id="CHEBI:18420"/>
    </ligand>
</feature>
<feature type="binding site" evidence="1">
    <location>
        <begin position="275"/>
        <end position="278"/>
    </location>
    <ligand>
        <name>GTP</name>
        <dbReference type="ChEBI" id="CHEBI:37565"/>
    </ligand>
</feature>
<feature type="binding site" evidence="1">
    <location>
        <position position="459"/>
    </location>
    <ligand>
        <name>(6S)-5-formyl-5,6,7,8-tetrahydrofolate</name>
        <dbReference type="ChEBI" id="CHEBI:57457"/>
    </ligand>
</feature>
<comment type="function">
    <text evidence="1">Exhibits a very high intrinsic GTPase hydrolysis rate. Involved in the addition of a carboxymethylaminomethyl (cmnm) group at the wobble position (U34) of certain tRNAs, forming tRNA-cmnm(5)s(2)U34.</text>
</comment>
<comment type="cofactor">
    <cofactor evidence="1">
        <name>K(+)</name>
        <dbReference type="ChEBI" id="CHEBI:29103"/>
    </cofactor>
    <text evidence="1">Binds 1 potassium ion per subunit.</text>
</comment>
<comment type="subunit">
    <text evidence="1">Homodimer. Heterotetramer of two MnmE and two MnmG subunits.</text>
</comment>
<comment type="subcellular location">
    <subcellularLocation>
        <location evidence="1">Cytoplasm</location>
    </subcellularLocation>
</comment>
<comment type="similarity">
    <text evidence="1">Belongs to the TRAFAC class TrmE-Era-EngA-EngB-Septin-like GTPase superfamily. TrmE GTPase family.</text>
</comment>
<dbReference type="EC" id="3.6.-.-" evidence="1"/>
<dbReference type="EMBL" id="BA000033">
    <property type="protein sequence ID" value="BAB96495.1"/>
    <property type="molecule type" value="Genomic_DNA"/>
</dbReference>
<dbReference type="RefSeq" id="WP_000362509.1">
    <property type="nucleotide sequence ID" value="NC_003923.1"/>
</dbReference>
<dbReference type="SMR" id="P66973"/>
<dbReference type="KEGG" id="sam:MW2630"/>
<dbReference type="HOGENOM" id="CLU_019624_4_1_9"/>
<dbReference type="GO" id="GO:0005829">
    <property type="term" value="C:cytosol"/>
    <property type="evidence" value="ECO:0007669"/>
    <property type="project" value="TreeGrafter"/>
</dbReference>
<dbReference type="GO" id="GO:0005525">
    <property type="term" value="F:GTP binding"/>
    <property type="evidence" value="ECO:0007669"/>
    <property type="project" value="UniProtKB-UniRule"/>
</dbReference>
<dbReference type="GO" id="GO:0003924">
    <property type="term" value="F:GTPase activity"/>
    <property type="evidence" value="ECO:0007669"/>
    <property type="project" value="UniProtKB-UniRule"/>
</dbReference>
<dbReference type="GO" id="GO:0046872">
    <property type="term" value="F:metal ion binding"/>
    <property type="evidence" value="ECO:0007669"/>
    <property type="project" value="UniProtKB-KW"/>
</dbReference>
<dbReference type="GO" id="GO:0030488">
    <property type="term" value="P:tRNA methylation"/>
    <property type="evidence" value="ECO:0007669"/>
    <property type="project" value="TreeGrafter"/>
</dbReference>
<dbReference type="GO" id="GO:0002098">
    <property type="term" value="P:tRNA wobble uridine modification"/>
    <property type="evidence" value="ECO:0007669"/>
    <property type="project" value="TreeGrafter"/>
</dbReference>
<dbReference type="CDD" id="cd04164">
    <property type="entry name" value="trmE"/>
    <property type="match status" value="1"/>
</dbReference>
<dbReference type="CDD" id="cd14858">
    <property type="entry name" value="TrmE_N"/>
    <property type="match status" value="1"/>
</dbReference>
<dbReference type="FunFam" id="3.30.1360.120:FF:000003">
    <property type="entry name" value="tRNA modification GTPase MnmE"/>
    <property type="match status" value="1"/>
</dbReference>
<dbReference type="FunFam" id="3.40.50.300:FF:000494">
    <property type="entry name" value="tRNA modification GTPase MnmE"/>
    <property type="match status" value="1"/>
</dbReference>
<dbReference type="Gene3D" id="3.40.50.300">
    <property type="entry name" value="P-loop containing nucleotide triphosphate hydrolases"/>
    <property type="match status" value="1"/>
</dbReference>
<dbReference type="Gene3D" id="3.30.1360.120">
    <property type="entry name" value="Probable tRNA modification gtpase trme, domain 1"/>
    <property type="match status" value="1"/>
</dbReference>
<dbReference type="Gene3D" id="1.20.120.430">
    <property type="entry name" value="tRNA modification GTPase MnmE domain 2"/>
    <property type="match status" value="1"/>
</dbReference>
<dbReference type="HAMAP" id="MF_00379">
    <property type="entry name" value="GTPase_MnmE"/>
    <property type="match status" value="1"/>
</dbReference>
<dbReference type="InterPro" id="IPR031168">
    <property type="entry name" value="G_TrmE"/>
</dbReference>
<dbReference type="InterPro" id="IPR006073">
    <property type="entry name" value="GTP-bd"/>
</dbReference>
<dbReference type="InterPro" id="IPR018948">
    <property type="entry name" value="GTP-bd_TrmE_N"/>
</dbReference>
<dbReference type="InterPro" id="IPR004520">
    <property type="entry name" value="GTPase_MnmE"/>
</dbReference>
<dbReference type="InterPro" id="IPR027368">
    <property type="entry name" value="MnmE_dom2"/>
</dbReference>
<dbReference type="InterPro" id="IPR025867">
    <property type="entry name" value="MnmE_helical"/>
</dbReference>
<dbReference type="InterPro" id="IPR027417">
    <property type="entry name" value="P-loop_NTPase"/>
</dbReference>
<dbReference type="InterPro" id="IPR005225">
    <property type="entry name" value="Small_GTP-bd"/>
</dbReference>
<dbReference type="InterPro" id="IPR027266">
    <property type="entry name" value="TrmE/GcvT_dom1"/>
</dbReference>
<dbReference type="NCBIfam" id="TIGR00450">
    <property type="entry name" value="mnmE_trmE_thdF"/>
    <property type="match status" value="1"/>
</dbReference>
<dbReference type="NCBIfam" id="NF003661">
    <property type="entry name" value="PRK05291.1-3"/>
    <property type="match status" value="1"/>
</dbReference>
<dbReference type="NCBIfam" id="TIGR00231">
    <property type="entry name" value="small_GTP"/>
    <property type="match status" value="1"/>
</dbReference>
<dbReference type="PANTHER" id="PTHR42714">
    <property type="entry name" value="TRNA MODIFICATION GTPASE GTPBP3"/>
    <property type="match status" value="1"/>
</dbReference>
<dbReference type="PANTHER" id="PTHR42714:SF2">
    <property type="entry name" value="TRNA MODIFICATION GTPASE GTPBP3, MITOCHONDRIAL"/>
    <property type="match status" value="1"/>
</dbReference>
<dbReference type="Pfam" id="PF01926">
    <property type="entry name" value="MMR_HSR1"/>
    <property type="match status" value="1"/>
</dbReference>
<dbReference type="Pfam" id="PF12631">
    <property type="entry name" value="MnmE_helical"/>
    <property type="match status" value="1"/>
</dbReference>
<dbReference type="Pfam" id="PF10396">
    <property type="entry name" value="TrmE_N"/>
    <property type="match status" value="1"/>
</dbReference>
<dbReference type="PRINTS" id="PR00449">
    <property type="entry name" value="RASTRNSFRMNG"/>
</dbReference>
<dbReference type="SUPFAM" id="SSF52540">
    <property type="entry name" value="P-loop containing nucleoside triphosphate hydrolases"/>
    <property type="match status" value="1"/>
</dbReference>
<dbReference type="SUPFAM" id="SSF116878">
    <property type="entry name" value="TrmE connector domain"/>
    <property type="match status" value="1"/>
</dbReference>
<dbReference type="PROSITE" id="PS51709">
    <property type="entry name" value="G_TRME"/>
    <property type="match status" value="1"/>
</dbReference>
<name>MNME_STAAW</name>
<reference key="1">
    <citation type="journal article" date="2002" name="Lancet">
        <title>Genome and virulence determinants of high virulence community-acquired MRSA.</title>
        <authorList>
            <person name="Baba T."/>
            <person name="Takeuchi F."/>
            <person name="Kuroda M."/>
            <person name="Yuzawa H."/>
            <person name="Aoki K."/>
            <person name="Oguchi A."/>
            <person name="Nagai Y."/>
            <person name="Iwama N."/>
            <person name="Asano K."/>
            <person name="Naimi T."/>
            <person name="Kuroda H."/>
            <person name="Cui L."/>
            <person name="Yamamoto K."/>
            <person name="Hiramatsu K."/>
        </authorList>
    </citation>
    <scope>NUCLEOTIDE SEQUENCE [LARGE SCALE GENOMIC DNA]</scope>
    <source>
        <strain>MW2</strain>
    </source>
</reference>
<protein>
    <recommendedName>
        <fullName evidence="1">tRNA modification GTPase MnmE</fullName>
        <ecNumber evidence="1">3.6.-.-</ecNumber>
    </recommendedName>
</protein>
<proteinExistence type="inferred from homology"/>
<organism>
    <name type="scientific">Staphylococcus aureus (strain MW2)</name>
    <dbReference type="NCBI Taxonomy" id="196620"/>
    <lineage>
        <taxon>Bacteria</taxon>
        <taxon>Bacillati</taxon>
        <taxon>Bacillota</taxon>
        <taxon>Bacilli</taxon>
        <taxon>Bacillales</taxon>
        <taxon>Staphylococcaceae</taxon>
        <taxon>Staphylococcus</taxon>
    </lineage>
</organism>
<gene>
    <name evidence="1" type="primary">mnmE</name>
    <name evidence="1" type="synonym">trmE</name>
    <name type="ordered locus">MW2630</name>
</gene>